<proteinExistence type="inferred from homology"/>
<keyword id="KW-0093">Biotin biosynthesis</keyword>
<keyword id="KW-0663">Pyridoxal phosphate</keyword>
<keyword id="KW-0808">Transferase</keyword>
<comment type="function">
    <text evidence="1">Catalyzes the decarboxylative condensation of pimeloyl-[acyl-carrier protein] and L-alanine to produce 8-amino-7-oxononanoate (AON), [acyl-carrier protein], and carbon dioxide.</text>
</comment>
<comment type="catalytic activity">
    <reaction evidence="1">
        <text>6-carboxyhexanoyl-[ACP] + L-alanine + H(+) = (8S)-8-amino-7-oxononanoate + holo-[ACP] + CO2</text>
        <dbReference type="Rhea" id="RHEA:42288"/>
        <dbReference type="Rhea" id="RHEA-COMP:9685"/>
        <dbReference type="Rhea" id="RHEA-COMP:9955"/>
        <dbReference type="ChEBI" id="CHEBI:15378"/>
        <dbReference type="ChEBI" id="CHEBI:16526"/>
        <dbReference type="ChEBI" id="CHEBI:57972"/>
        <dbReference type="ChEBI" id="CHEBI:64479"/>
        <dbReference type="ChEBI" id="CHEBI:78846"/>
        <dbReference type="ChEBI" id="CHEBI:149468"/>
        <dbReference type="EC" id="2.3.1.47"/>
    </reaction>
</comment>
<comment type="cofactor">
    <cofactor evidence="1">
        <name>pyridoxal 5'-phosphate</name>
        <dbReference type="ChEBI" id="CHEBI:597326"/>
    </cofactor>
</comment>
<comment type="pathway">
    <text evidence="1">Cofactor biosynthesis; biotin biosynthesis.</text>
</comment>
<comment type="subunit">
    <text evidence="1">Homodimer.</text>
</comment>
<comment type="similarity">
    <text evidence="1">Belongs to the class-II pyridoxal-phosphate-dependent aminotransferase family. BioF subfamily.</text>
</comment>
<gene>
    <name evidence="1" type="primary">bioF</name>
    <name type="ordered locus">AnaeK_3534</name>
</gene>
<evidence type="ECO:0000255" key="1">
    <source>
        <dbReference type="HAMAP-Rule" id="MF_01693"/>
    </source>
</evidence>
<dbReference type="EC" id="2.3.1.47" evidence="1"/>
<dbReference type="EMBL" id="CP001131">
    <property type="protein sequence ID" value="ACG74747.1"/>
    <property type="molecule type" value="Genomic_DNA"/>
</dbReference>
<dbReference type="RefSeq" id="WP_012527516.1">
    <property type="nucleotide sequence ID" value="NC_011145.1"/>
</dbReference>
<dbReference type="SMR" id="B4UCB1"/>
<dbReference type="KEGG" id="ank:AnaeK_3534"/>
<dbReference type="HOGENOM" id="CLU_015846_11_0_7"/>
<dbReference type="OrthoDB" id="9807157at2"/>
<dbReference type="UniPathway" id="UPA00078"/>
<dbReference type="Proteomes" id="UP000001871">
    <property type="component" value="Chromosome"/>
</dbReference>
<dbReference type="GO" id="GO:0008710">
    <property type="term" value="F:8-amino-7-oxononanoate synthase activity"/>
    <property type="evidence" value="ECO:0007669"/>
    <property type="project" value="UniProtKB-EC"/>
</dbReference>
<dbReference type="GO" id="GO:0030170">
    <property type="term" value="F:pyridoxal phosphate binding"/>
    <property type="evidence" value="ECO:0007669"/>
    <property type="project" value="InterPro"/>
</dbReference>
<dbReference type="GO" id="GO:0009102">
    <property type="term" value="P:biotin biosynthetic process"/>
    <property type="evidence" value="ECO:0007669"/>
    <property type="project" value="UniProtKB-UniPathway"/>
</dbReference>
<dbReference type="CDD" id="cd06454">
    <property type="entry name" value="KBL_like"/>
    <property type="match status" value="1"/>
</dbReference>
<dbReference type="Gene3D" id="3.90.1150.10">
    <property type="entry name" value="Aspartate Aminotransferase, domain 1"/>
    <property type="match status" value="1"/>
</dbReference>
<dbReference type="Gene3D" id="3.40.640.10">
    <property type="entry name" value="Type I PLP-dependent aspartate aminotransferase-like (Major domain)"/>
    <property type="match status" value="1"/>
</dbReference>
<dbReference type="HAMAP" id="MF_01693">
    <property type="entry name" value="BioF_aminotrans_2"/>
    <property type="match status" value="1"/>
</dbReference>
<dbReference type="InterPro" id="IPR001917">
    <property type="entry name" value="Aminotrans_II_pyridoxalP_BS"/>
</dbReference>
<dbReference type="InterPro" id="IPR004839">
    <property type="entry name" value="Aminotransferase_I/II_large"/>
</dbReference>
<dbReference type="InterPro" id="IPR050087">
    <property type="entry name" value="AON_synthase_class-II"/>
</dbReference>
<dbReference type="InterPro" id="IPR004723">
    <property type="entry name" value="AONS_Archaea/Proteobacteria"/>
</dbReference>
<dbReference type="InterPro" id="IPR022834">
    <property type="entry name" value="AONS_Proteobacteria"/>
</dbReference>
<dbReference type="InterPro" id="IPR015424">
    <property type="entry name" value="PyrdxlP-dep_Trfase"/>
</dbReference>
<dbReference type="InterPro" id="IPR015421">
    <property type="entry name" value="PyrdxlP-dep_Trfase_major"/>
</dbReference>
<dbReference type="InterPro" id="IPR015422">
    <property type="entry name" value="PyrdxlP-dep_Trfase_small"/>
</dbReference>
<dbReference type="NCBIfam" id="TIGR00858">
    <property type="entry name" value="bioF"/>
    <property type="match status" value="1"/>
</dbReference>
<dbReference type="PANTHER" id="PTHR13693:SF100">
    <property type="entry name" value="8-AMINO-7-OXONONANOATE SYNTHASE"/>
    <property type="match status" value="1"/>
</dbReference>
<dbReference type="PANTHER" id="PTHR13693">
    <property type="entry name" value="CLASS II AMINOTRANSFERASE/8-AMINO-7-OXONONANOATE SYNTHASE"/>
    <property type="match status" value="1"/>
</dbReference>
<dbReference type="Pfam" id="PF00155">
    <property type="entry name" value="Aminotran_1_2"/>
    <property type="match status" value="1"/>
</dbReference>
<dbReference type="SUPFAM" id="SSF53383">
    <property type="entry name" value="PLP-dependent transferases"/>
    <property type="match status" value="1"/>
</dbReference>
<dbReference type="PROSITE" id="PS00599">
    <property type="entry name" value="AA_TRANSFER_CLASS_2"/>
    <property type="match status" value="1"/>
</dbReference>
<sequence>MARGALDWIGAELEALDAKGLRRSLEPIGPAQGPVVQVGGRALVNLCSNDYLGLAADPRVRAAAADAAMRFGAGSGAARLVAGDLPPHGALEARLAAWKGREAALLFGSGYHANAGVPGALVGRDDAVFSDVLNHASIVDGCLLSRAELVRYRHCDVEELAGLLARTRARRKLVVTDAIFSMDGDAAPLRELAELCDRHGAMLYVDEAHAAGVLGPNGAGLAEALGVQDRVDVHMGTLGKALGAFGAYVAGERRLIELLVSRARPFVFSTALPPPACAAALAALEVVATEPSRRTHLFALCARMQAGLARLGFDVARVASPIFPVVLGTEVRALAAAAALRERGWFVRAIRPPTVPHGTSRLRVALSAAHDAAQVDGFLAALAAVLPDLPPAEPRRAG</sequence>
<reference key="1">
    <citation type="submission" date="2008-08" db="EMBL/GenBank/DDBJ databases">
        <title>Complete sequence of Anaeromyxobacter sp. K.</title>
        <authorList>
            <consortium name="US DOE Joint Genome Institute"/>
            <person name="Lucas S."/>
            <person name="Copeland A."/>
            <person name="Lapidus A."/>
            <person name="Glavina del Rio T."/>
            <person name="Dalin E."/>
            <person name="Tice H."/>
            <person name="Bruce D."/>
            <person name="Goodwin L."/>
            <person name="Pitluck S."/>
            <person name="Saunders E."/>
            <person name="Brettin T."/>
            <person name="Detter J.C."/>
            <person name="Han C."/>
            <person name="Larimer F."/>
            <person name="Land M."/>
            <person name="Hauser L."/>
            <person name="Kyrpides N."/>
            <person name="Ovchinnikiva G."/>
            <person name="Beliaev A."/>
        </authorList>
    </citation>
    <scope>NUCLEOTIDE SEQUENCE [LARGE SCALE GENOMIC DNA]</scope>
    <source>
        <strain>K</strain>
    </source>
</reference>
<name>BIOF_ANASK</name>
<protein>
    <recommendedName>
        <fullName evidence="1">8-amino-7-oxononanoate synthase</fullName>
        <shortName evidence="1">AONS</shortName>
        <ecNumber evidence="1">2.3.1.47</ecNumber>
    </recommendedName>
    <alternativeName>
        <fullName evidence="1">7-keto-8-amino-pelargonic acid synthase</fullName>
        <shortName evidence="1">7-KAP synthase</shortName>
        <shortName evidence="1">KAPA synthase</shortName>
    </alternativeName>
    <alternativeName>
        <fullName evidence="1">8-amino-7-ketopelargonate synthase</fullName>
    </alternativeName>
</protein>
<feature type="chain" id="PRO_0000380897" description="8-amino-7-oxononanoate synthase">
    <location>
        <begin position="1"/>
        <end position="398"/>
    </location>
</feature>
<feature type="binding site" evidence="1">
    <location>
        <position position="23"/>
    </location>
    <ligand>
        <name>substrate</name>
    </ligand>
</feature>
<feature type="binding site" evidence="1">
    <location>
        <begin position="110"/>
        <end position="111"/>
    </location>
    <ligand>
        <name>pyridoxal 5'-phosphate</name>
        <dbReference type="ChEBI" id="CHEBI:597326"/>
    </ligand>
</feature>
<feature type="binding site" evidence="1">
    <location>
        <position position="135"/>
    </location>
    <ligand>
        <name>substrate</name>
    </ligand>
</feature>
<feature type="binding site" evidence="1">
    <location>
        <position position="181"/>
    </location>
    <ligand>
        <name>pyridoxal 5'-phosphate</name>
        <dbReference type="ChEBI" id="CHEBI:597326"/>
    </ligand>
</feature>
<feature type="binding site" evidence="1">
    <location>
        <position position="209"/>
    </location>
    <ligand>
        <name>pyridoxal 5'-phosphate</name>
        <dbReference type="ChEBI" id="CHEBI:597326"/>
    </ligand>
</feature>
<feature type="binding site" evidence="1">
    <location>
        <position position="237"/>
    </location>
    <ligand>
        <name>pyridoxal 5'-phosphate</name>
        <dbReference type="ChEBI" id="CHEBI:597326"/>
    </ligand>
</feature>
<feature type="binding site" evidence="1">
    <location>
        <position position="354"/>
    </location>
    <ligand>
        <name>substrate</name>
    </ligand>
</feature>
<feature type="modified residue" description="N6-(pyridoxal phosphate)lysine" evidence="1">
    <location>
        <position position="240"/>
    </location>
</feature>
<organism>
    <name type="scientific">Anaeromyxobacter sp. (strain K)</name>
    <dbReference type="NCBI Taxonomy" id="447217"/>
    <lineage>
        <taxon>Bacteria</taxon>
        <taxon>Pseudomonadati</taxon>
        <taxon>Myxococcota</taxon>
        <taxon>Myxococcia</taxon>
        <taxon>Myxococcales</taxon>
        <taxon>Cystobacterineae</taxon>
        <taxon>Anaeromyxobacteraceae</taxon>
        <taxon>Anaeromyxobacter</taxon>
    </lineage>
</organism>
<accession>B4UCB1</accession>